<dbReference type="EC" id="6.3.5.11" evidence="1"/>
<dbReference type="EMBL" id="AE010301">
    <property type="protein sequence ID" value="AAN51713.1"/>
    <property type="molecule type" value="Genomic_DNA"/>
</dbReference>
<dbReference type="RefSeq" id="NP_714698.1">
    <property type="nucleotide sequence ID" value="NC_004343.2"/>
</dbReference>
<dbReference type="RefSeq" id="WP_001022072.1">
    <property type="nucleotide sequence ID" value="NC_004343.2"/>
</dbReference>
<dbReference type="SMR" id="Q8EXQ4"/>
<dbReference type="STRING" id="189518.LB_154"/>
<dbReference type="PaxDb" id="189518-LB_154"/>
<dbReference type="EnsemblBacteria" id="AAN51713">
    <property type="protein sequence ID" value="AAN51713"/>
    <property type="gene ID" value="LB_154"/>
</dbReference>
<dbReference type="KEGG" id="lil:LB_154"/>
<dbReference type="PATRIC" id="fig|189518.3.peg.4482"/>
<dbReference type="HOGENOM" id="CLU_022752_2_0_12"/>
<dbReference type="InParanoid" id="Q8EXQ4"/>
<dbReference type="OrthoDB" id="9764035at2"/>
<dbReference type="UniPathway" id="UPA00148">
    <property type="reaction ID" value="UER00231"/>
</dbReference>
<dbReference type="Proteomes" id="UP000001408">
    <property type="component" value="Chromosome II"/>
</dbReference>
<dbReference type="GO" id="GO:0005524">
    <property type="term" value="F:ATP binding"/>
    <property type="evidence" value="ECO:0007669"/>
    <property type="project" value="UniProtKB-UniRule"/>
</dbReference>
<dbReference type="GO" id="GO:0042242">
    <property type="term" value="F:cobyrinic acid a,c-diamide synthase activity"/>
    <property type="evidence" value="ECO:0007669"/>
    <property type="project" value="UniProtKB-UniRule"/>
</dbReference>
<dbReference type="GO" id="GO:0009236">
    <property type="term" value="P:cobalamin biosynthetic process"/>
    <property type="evidence" value="ECO:0007669"/>
    <property type="project" value="UniProtKB-UniRule"/>
</dbReference>
<dbReference type="CDD" id="cd05388">
    <property type="entry name" value="CobB_N"/>
    <property type="match status" value="1"/>
</dbReference>
<dbReference type="CDD" id="cd03130">
    <property type="entry name" value="GATase1_CobB"/>
    <property type="match status" value="1"/>
</dbReference>
<dbReference type="Gene3D" id="3.40.50.880">
    <property type="match status" value="1"/>
</dbReference>
<dbReference type="Gene3D" id="3.40.50.300">
    <property type="entry name" value="P-loop containing nucleotide triphosphate hydrolases"/>
    <property type="match status" value="2"/>
</dbReference>
<dbReference type="HAMAP" id="MF_00027">
    <property type="entry name" value="CobB_CbiA"/>
    <property type="match status" value="1"/>
</dbReference>
<dbReference type="InterPro" id="IPR004484">
    <property type="entry name" value="CbiA/CobB_synth"/>
</dbReference>
<dbReference type="InterPro" id="IPR029062">
    <property type="entry name" value="Class_I_gatase-like"/>
</dbReference>
<dbReference type="InterPro" id="IPR002586">
    <property type="entry name" value="CobQ/CobB/MinD/ParA_Nub-bd_dom"/>
</dbReference>
<dbReference type="InterPro" id="IPR011698">
    <property type="entry name" value="GATase_3"/>
</dbReference>
<dbReference type="InterPro" id="IPR027417">
    <property type="entry name" value="P-loop_NTPase"/>
</dbReference>
<dbReference type="NCBIfam" id="TIGR00379">
    <property type="entry name" value="cobB"/>
    <property type="match status" value="1"/>
</dbReference>
<dbReference type="NCBIfam" id="NF002204">
    <property type="entry name" value="PRK01077.1"/>
    <property type="match status" value="1"/>
</dbReference>
<dbReference type="PANTHER" id="PTHR43873">
    <property type="entry name" value="COBYRINATE A,C-DIAMIDE SYNTHASE"/>
    <property type="match status" value="1"/>
</dbReference>
<dbReference type="PANTHER" id="PTHR43873:SF1">
    <property type="entry name" value="COBYRINATE A,C-DIAMIDE SYNTHASE"/>
    <property type="match status" value="1"/>
</dbReference>
<dbReference type="Pfam" id="PF01656">
    <property type="entry name" value="CbiA"/>
    <property type="match status" value="1"/>
</dbReference>
<dbReference type="Pfam" id="PF07685">
    <property type="entry name" value="GATase_3"/>
    <property type="match status" value="1"/>
</dbReference>
<dbReference type="SUPFAM" id="SSF52317">
    <property type="entry name" value="Class I glutamine amidotransferase-like"/>
    <property type="match status" value="1"/>
</dbReference>
<dbReference type="SUPFAM" id="SSF52540">
    <property type="entry name" value="P-loop containing nucleoside triphosphate hydrolases"/>
    <property type="match status" value="1"/>
</dbReference>
<dbReference type="PROSITE" id="PS51274">
    <property type="entry name" value="GATASE_COBBQ"/>
    <property type="match status" value="1"/>
</dbReference>
<organism>
    <name type="scientific">Leptospira interrogans serogroup Icterohaemorrhagiae serovar Lai (strain 56601)</name>
    <dbReference type="NCBI Taxonomy" id="189518"/>
    <lineage>
        <taxon>Bacteria</taxon>
        <taxon>Pseudomonadati</taxon>
        <taxon>Spirochaetota</taxon>
        <taxon>Spirochaetia</taxon>
        <taxon>Leptospirales</taxon>
        <taxon>Leptospiraceae</taxon>
        <taxon>Leptospira</taxon>
    </lineage>
</organism>
<feature type="chain" id="PRO_0000141258" description="Cobyrinate a,c-diamide synthase">
    <location>
        <begin position="1"/>
        <end position="454"/>
    </location>
</feature>
<feature type="domain" description="GATase cobBQ-type" evidence="1">
    <location>
        <begin position="247"/>
        <end position="442"/>
    </location>
</feature>
<feature type="active site" description="Nucleophile" evidence="1">
    <location>
        <position position="329"/>
    </location>
</feature>
<feature type="site" description="Increases nucleophilicity of active site Cys" evidence="1">
    <location>
        <position position="434"/>
    </location>
</feature>
<reference key="1">
    <citation type="journal article" date="2003" name="Nature">
        <title>Unique physiological and pathogenic features of Leptospira interrogans revealed by whole-genome sequencing.</title>
        <authorList>
            <person name="Ren S.-X."/>
            <person name="Fu G."/>
            <person name="Jiang X.-G."/>
            <person name="Zeng R."/>
            <person name="Miao Y.-G."/>
            <person name="Xu H."/>
            <person name="Zhang Y.-X."/>
            <person name="Xiong H."/>
            <person name="Lu G."/>
            <person name="Lu L.-F."/>
            <person name="Jiang H.-Q."/>
            <person name="Jia J."/>
            <person name="Tu Y.-F."/>
            <person name="Jiang J.-X."/>
            <person name="Gu W.-Y."/>
            <person name="Zhang Y.-Q."/>
            <person name="Cai Z."/>
            <person name="Sheng H.-H."/>
            <person name="Yin H.-F."/>
            <person name="Zhang Y."/>
            <person name="Zhu G.-F."/>
            <person name="Wan M."/>
            <person name="Huang H.-L."/>
            <person name="Qian Z."/>
            <person name="Wang S.-Y."/>
            <person name="Ma W."/>
            <person name="Yao Z.-J."/>
            <person name="Shen Y."/>
            <person name="Qiang B.-Q."/>
            <person name="Xia Q.-C."/>
            <person name="Guo X.-K."/>
            <person name="Danchin A."/>
            <person name="Saint Girons I."/>
            <person name="Somerville R.L."/>
            <person name="Wen Y.-M."/>
            <person name="Shi M.-H."/>
            <person name="Chen Z."/>
            <person name="Xu J.-G."/>
            <person name="Zhao G.-P."/>
        </authorList>
    </citation>
    <scope>NUCLEOTIDE SEQUENCE [LARGE SCALE GENOMIC DNA]</scope>
    <source>
        <strain>56601</strain>
    </source>
</reference>
<comment type="function">
    <text evidence="1">Catalyzes the ATP-dependent amidation of the two carboxylate groups at positions a and c of cobyrinate, using either L-glutamine or ammonia as the nitrogen source.</text>
</comment>
<comment type="catalytic activity">
    <reaction evidence="1">
        <text>cob(II)yrinate + 2 L-glutamine + 2 ATP + 2 H2O = cob(II)yrinate a,c diamide + 2 L-glutamate + 2 ADP + 2 phosphate + 2 H(+)</text>
        <dbReference type="Rhea" id="RHEA:26289"/>
        <dbReference type="ChEBI" id="CHEBI:15377"/>
        <dbReference type="ChEBI" id="CHEBI:15378"/>
        <dbReference type="ChEBI" id="CHEBI:29985"/>
        <dbReference type="ChEBI" id="CHEBI:30616"/>
        <dbReference type="ChEBI" id="CHEBI:43474"/>
        <dbReference type="ChEBI" id="CHEBI:58359"/>
        <dbReference type="ChEBI" id="CHEBI:58537"/>
        <dbReference type="ChEBI" id="CHEBI:58894"/>
        <dbReference type="ChEBI" id="CHEBI:456216"/>
        <dbReference type="EC" id="6.3.5.11"/>
    </reaction>
</comment>
<comment type="cofactor">
    <cofactor evidence="1">
        <name>Mg(2+)</name>
        <dbReference type="ChEBI" id="CHEBI:18420"/>
    </cofactor>
</comment>
<comment type="pathway">
    <text evidence="1">Cofactor biosynthesis; adenosylcobalamin biosynthesis; cob(II)yrinate a,c-diamide from sirohydrochlorin (anaerobic route): step 10/10.</text>
</comment>
<comment type="domain">
    <text evidence="1">Comprises of two domains. The C-terminal domain contains the binding site for glutamine and catalyzes the hydrolysis of this substrate to glutamate and ammonia. The N-terminal domain is anticipated to bind ATP and cobyrinate and catalyzes the ultimate synthesis of the diamide product. The ammonia produced via the glutaminase domain is probably translocated to the adjacent domain via a molecular tunnel, where it reacts with an activated intermediate.</text>
</comment>
<comment type="miscellaneous">
    <text evidence="1">The a and c carboxylates of cobyrinate are activated for nucleophilic attack via formation of a phosphorylated intermediate by ATP. CbiA catalyzes first the amidation of the c-carboxylate, and then that of the a-carboxylate.</text>
</comment>
<comment type="similarity">
    <text evidence="1">Belongs to the CobB/CbiA family.</text>
</comment>
<gene>
    <name evidence="1" type="primary">cbiA</name>
    <name type="synonym">cobB</name>
    <name type="ordered locus">LB_154</name>
</gene>
<proteinExistence type="inferred from homology"/>
<protein>
    <recommendedName>
        <fullName evidence="1">Cobyrinate a,c-diamide synthase</fullName>
        <ecNumber evidence="1">6.3.5.11</ecNumber>
    </recommendedName>
    <alternativeName>
        <fullName evidence="1">Cobyrinic acid a,c-diamide synthetase</fullName>
    </alternativeName>
</protein>
<name>CBIA_LEPIN</name>
<sequence>MNIKIPRIVIGGTGSGVGKTTIALALTQILRKKGLKVATFKCGPDYLDPTYHSRASQKICHNLDGWLMGKESVLNTFYQACHNVDIVIIEGMMGLFDGHSPNSEIGSTAEIAKWLASPVLVVLDTRGMARTVSAILKGLKIFDPDLNLAGAFANFTGSPSHIQLLKDASTEVPILGGLCKHSEQTFPERHLGLYSASEENVSEEKFNFWGEEGEKSLEVNSILEIANSAPEISIPVSNINTTLKRCKIGIAMDSAFHFYYEENLMRLRQAGAELVFFSPLSDSKLTDVDGLYFGGGYPEVFAPTLSKNKSLLNYIQDLSYKNIPIYAECGGLMYLSKGIKLVEGEFFPMLGLISATSIMEKKLKALGYVEVTTKKETIFGEVGLRFRGHQFRYSDLELDESNPIELVYNLRKRKSDQVSEEGYSKNSILASYIHAHWASNPNLAEGFVQSCLRK</sequence>
<accession>Q8EXQ4</accession>
<evidence type="ECO:0000255" key="1">
    <source>
        <dbReference type="HAMAP-Rule" id="MF_00027"/>
    </source>
</evidence>
<keyword id="KW-0067">ATP-binding</keyword>
<keyword id="KW-0169">Cobalamin biosynthesis</keyword>
<keyword id="KW-0315">Glutamine amidotransferase</keyword>
<keyword id="KW-0436">Ligase</keyword>
<keyword id="KW-0460">Magnesium</keyword>
<keyword id="KW-0547">Nucleotide-binding</keyword>
<keyword id="KW-1185">Reference proteome</keyword>